<dbReference type="EC" id="2.3.1.180" evidence="1"/>
<dbReference type="EMBL" id="CP000153">
    <property type="protein sequence ID" value="ABB45045.1"/>
    <property type="molecule type" value="Genomic_DNA"/>
</dbReference>
<dbReference type="RefSeq" id="WP_011373386.1">
    <property type="nucleotide sequence ID" value="NC_007575.1"/>
</dbReference>
<dbReference type="SMR" id="Q30PN6"/>
<dbReference type="STRING" id="326298.Suden_1771"/>
<dbReference type="KEGG" id="tdn:Suden_1771"/>
<dbReference type="eggNOG" id="COG0332">
    <property type="taxonomic scope" value="Bacteria"/>
</dbReference>
<dbReference type="HOGENOM" id="CLU_039592_4_1_7"/>
<dbReference type="OrthoDB" id="9815506at2"/>
<dbReference type="UniPathway" id="UPA00094"/>
<dbReference type="Proteomes" id="UP000002714">
    <property type="component" value="Chromosome"/>
</dbReference>
<dbReference type="GO" id="GO:0005737">
    <property type="term" value="C:cytoplasm"/>
    <property type="evidence" value="ECO:0007669"/>
    <property type="project" value="UniProtKB-SubCell"/>
</dbReference>
<dbReference type="GO" id="GO:0004315">
    <property type="term" value="F:3-oxoacyl-[acyl-carrier-protein] synthase activity"/>
    <property type="evidence" value="ECO:0007669"/>
    <property type="project" value="InterPro"/>
</dbReference>
<dbReference type="GO" id="GO:0033818">
    <property type="term" value="F:beta-ketoacyl-acyl-carrier-protein synthase III activity"/>
    <property type="evidence" value="ECO:0007669"/>
    <property type="project" value="UniProtKB-UniRule"/>
</dbReference>
<dbReference type="GO" id="GO:0006633">
    <property type="term" value="P:fatty acid biosynthetic process"/>
    <property type="evidence" value="ECO:0007669"/>
    <property type="project" value="UniProtKB-UniRule"/>
</dbReference>
<dbReference type="GO" id="GO:0044550">
    <property type="term" value="P:secondary metabolite biosynthetic process"/>
    <property type="evidence" value="ECO:0007669"/>
    <property type="project" value="TreeGrafter"/>
</dbReference>
<dbReference type="CDD" id="cd00830">
    <property type="entry name" value="KAS_III"/>
    <property type="match status" value="1"/>
</dbReference>
<dbReference type="FunFam" id="3.40.47.10:FF:000004">
    <property type="entry name" value="3-oxoacyl-[acyl-carrier-protein] synthase 3"/>
    <property type="match status" value="1"/>
</dbReference>
<dbReference type="Gene3D" id="3.40.47.10">
    <property type="match status" value="1"/>
</dbReference>
<dbReference type="HAMAP" id="MF_01815">
    <property type="entry name" value="FabH"/>
    <property type="match status" value="1"/>
</dbReference>
<dbReference type="InterPro" id="IPR013747">
    <property type="entry name" value="ACP_syn_III_C"/>
</dbReference>
<dbReference type="InterPro" id="IPR013751">
    <property type="entry name" value="ACP_syn_III_N"/>
</dbReference>
<dbReference type="InterPro" id="IPR004655">
    <property type="entry name" value="FabH"/>
</dbReference>
<dbReference type="InterPro" id="IPR016039">
    <property type="entry name" value="Thiolase-like"/>
</dbReference>
<dbReference type="NCBIfam" id="TIGR00747">
    <property type="entry name" value="fabH"/>
    <property type="match status" value="1"/>
</dbReference>
<dbReference type="NCBIfam" id="NF006829">
    <property type="entry name" value="PRK09352.1"/>
    <property type="match status" value="1"/>
</dbReference>
<dbReference type="PANTHER" id="PTHR34069">
    <property type="entry name" value="3-OXOACYL-[ACYL-CARRIER-PROTEIN] SYNTHASE 3"/>
    <property type="match status" value="1"/>
</dbReference>
<dbReference type="PANTHER" id="PTHR34069:SF2">
    <property type="entry name" value="BETA-KETOACYL-[ACYL-CARRIER-PROTEIN] SYNTHASE III"/>
    <property type="match status" value="1"/>
</dbReference>
<dbReference type="Pfam" id="PF08545">
    <property type="entry name" value="ACP_syn_III"/>
    <property type="match status" value="1"/>
</dbReference>
<dbReference type="Pfam" id="PF08541">
    <property type="entry name" value="ACP_syn_III_C"/>
    <property type="match status" value="1"/>
</dbReference>
<dbReference type="SUPFAM" id="SSF53901">
    <property type="entry name" value="Thiolase-like"/>
    <property type="match status" value="1"/>
</dbReference>
<name>FABH_SULDN</name>
<reference key="1">
    <citation type="journal article" date="2008" name="Appl. Environ. Microbiol.">
        <title>Genome of the epsilonproteobacterial chemolithoautotroph Sulfurimonas denitrificans.</title>
        <authorList>
            <person name="Sievert S.M."/>
            <person name="Scott K.M."/>
            <person name="Klotz M.G."/>
            <person name="Chain P.S.G."/>
            <person name="Hauser L.J."/>
            <person name="Hemp J."/>
            <person name="Huegler M."/>
            <person name="Land M."/>
            <person name="Lapidus A."/>
            <person name="Larimer F.W."/>
            <person name="Lucas S."/>
            <person name="Malfatti S.A."/>
            <person name="Meyer F."/>
            <person name="Paulsen I.T."/>
            <person name="Ren Q."/>
            <person name="Simon J."/>
            <person name="Bailey K."/>
            <person name="Diaz E."/>
            <person name="Fitzpatrick K.A."/>
            <person name="Glover B."/>
            <person name="Gwatney N."/>
            <person name="Korajkic A."/>
            <person name="Long A."/>
            <person name="Mobberley J.M."/>
            <person name="Pantry S.N."/>
            <person name="Pazder G."/>
            <person name="Peterson S."/>
            <person name="Quintanilla J.D."/>
            <person name="Sprinkle R."/>
            <person name="Stephens J."/>
            <person name="Thomas P."/>
            <person name="Vaughn R."/>
            <person name="Weber M.J."/>
            <person name="Wooten L.L."/>
        </authorList>
    </citation>
    <scope>NUCLEOTIDE SEQUENCE [LARGE SCALE GENOMIC DNA]</scope>
    <source>
        <strain>ATCC 33889 / DSM 1251</strain>
    </source>
</reference>
<keyword id="KW-0012">Acyltransferase</keyword>
<keyword id="KW-0963">Cytoplasm</keyword>
<keyword id="KW-0275">Fatty acid biosynthesis</keyword>
<keyword id="KW-0276">Fatty acid metabolism</keyword>
<keyword id="KW-0444">Lipid biosynthesis</keyword>
<keyword id="KW-0443">Lipid metabolism</keyword>
<keyword id="KW-0511">Multifunctional enzyme</keyword>
<keyword id="KW-1185">Reference proteome</keyword>
<keyword id="KW-0808">Transferase</keyword>
<accession>Q30PN6</accession>
<sequence>MAYAAFRSIGAYVPSKILSNEDLSKMVDTTDEWITKRTGIKERHIAADGEFTSDMGAKAAQIAIERSGIEKNKIDMIVCATISPDYFCMPSTATIISTKLGLENVTAFDISAACTGFVYILSIAKAFIESGMKKNVLIIGAEKLSSITDYTDRGTCILFGDGAGAAIISATDDKSEAIIDIHTGADGEFADLLMSPNGGSGSIHDTLDQEAKSCFMQMKGNETFKVAVKTLTKDVIEILQDNNIESSEIKHFVPHQANLRIIKAVGDALKLNDEQVVLTVEKFGNTSGASIPMAINDIYESGKLKAGELMLLDAFGGGLTWGSALVPFSPLK</sequence>
<feature type="chain" id="PRO_1000056438" description="Beta-ketoacyl-[acyl-carrier-protein] synthase III">
    <location>
        <begin position="1"/>
        <end position="332"/>
    </location>
</feature>
<feature type="region of interest" description="ACP-binding" evidence="1">
    <location>
        <begin position="256"/>
        <end position="260"/>
    </location>
</feature>
<feature type="active site" evidence="1">
    <location>
        <position position="114"/>
    </location>
</feature>
<feature type="active site" evidence="1">
    <location>
        <position position="255"/>
    </location>
</feature>
<feature type="active site" evidence="1">
    <location>
        <position position="285"/>
    </location>
</feature>
<gene>
    <name evidence="1" type="primary">fabH</name>
    <name type="ordered locus">Suden_1771</name>
</gene>
<proteinExistence type="inferred from homology"/>
<organism>
    <name type="scientific">Sulfurimonas denitrificans (strain ATCC 33889 / DSM 1251)</name>
    <name type="common">Thiomicrospira denitrificans (strain ATCC 33889 / DSM 1251)</name>
    <dbReference type="NCBI Taxonomy" id="326298"/>
    <lineage>
        <taxon>Bacteria</taxon>
        <taxon>Pseudomonadati</taxon>
        <taxon>Campylobacterota</taxon>
        <taxon>Epsilonproteobacteria</taxon>
        <taxon>Campylobacterales</taxon>
        <taxon>Sulfurimonadaceae</taxon>
        <taxon>Sulfurimonas</taxon>
    </lineage>
</organism>
<evidence type="ECO:0000255" key="1">
    <source>
        <dbReference type="HAMAP-Rule" id="MF_01815"/>
    </source>
</evidence>
<comment type="function">
    <text evidence="1">Catalyzes the condensation reaction of fatty acid synthesis by the addition to an acyl acceptor of two carbons from malonyl-ACP. Catalyzes the first condensation reaction which initiates fatty acid synthesis and may therefore play a role in governing the total rate of fatty acid production. Possesses both acetoacetyl-ACP synthase and acetyl transacylase activities. Its substrate specificity determines the biosynthesis of branched-chain and/or straight-chain of fatty acids.</text>
</comment>
<comment type="catalytic activity">
    <reaction evidence="1">
        <text>malonyl-[ACP] + acetyl-CoA + H(+) = 3-oxobutanoyl-[ACP] + CO2 + CoA</text>
        <dbReference type="Rhea" id="RHEA:12080"/>
        <dbReference type="Rhea" id="RHEA-COMP:9623"/>
        <dbReference type="Rhea" id="RHEA-COMP:9625"/>
        <dbReference type="ChEBI" id="CHEBI:15378"/>
        <dbReference type="ChEBI" id="CHEBI:16526"/>
        <dbReference type="ChEBI" id="CHEBI:57287"/>
        <dbReference type="ChEBI" id="CHEBI:57288"/>
        <dbReference type="ChEBI" id="CHEBI:78449"/>
        <dbReference type="ChEBI" id="CHEBI:78450"/>
        <dbReference type="EC" id="2.3.1.180"/>
    </reaction>
</comment>
<comment type="pathway">
    <text evidence="1">Lipid metabolism; fatty acid biosynthesis.</text>
</comment>
<comment type="subunit">
    <text evidence="1">Homodimer.</text>
</comment>
<comment type="subcellular location">
    <subcellularLocation>
        <location evidence="1">Cytoplasm</location>
    </subcellularLocation>
</comment>
<comment type="domain">
    <text evidence="1">The last Arg residue of the ACP-binding site is essential for the weak association between ACP/AcpP and FabH.</text>
</comment>
<comment type="similarity">
    <text evidence="1">Belongs to the thiolase-like superfamily. FabH family.</text>
</comment>
<protein>
    <recommendedName>
        <fullName evidence="1">Beta-ketoacyl-[acyl-carrier-protein] synthase III</fullName>
        <shortName evidence="1">Beta-ketoacyl-ACP synthase III</shortName>
        <shortName evidence="1">KAS III</shortName>
        <ecNumber evidence="1">2.3.1.180</ecNumber>
    </recommendedName>
    <alternativeName>
        <fullName evidence="1">3-oxoacyl-[acyl-carrier-protein] synthase 3</fullName>
    </alternativeName>
    <alternativeName>
        <fullName evidence="1">3-oxoacyl-[acyl-carrier-protein] synthase III</fullName>
    </alternativeName>
</protein>